<reference key="1">
    <citation type="journal article" date="2001" name="Nature">
        <title>Complete genome sequence of Salmonella enterica serovar Typhimurium LT2.</title>
        <authorList>
            <person name="McClelland M."/>
            <person name="Sanderson K.E."/>
            <person name="Spieth J."/>
            <person name="Clifton S.W."/>
            <person name="Latreille P."/>
            <person name="Courtney L."/>
            <person name="Porwollik S."/>
            <person name="Ali J."/>
            <person name="Dante M."/>
            <person name="Du F."/>
            <person name="Hou S."/>
            <person name="Layman D."/>
            <person name="Leonard S."/>
            <person name="Nguyen C."/>
            <person name="Scott K."/>
            <person name="Holmes A."/>
            <person name="Grewal N."/>
            <person name="Mulvaney E."/>
            <person name="Ryan E."/>
            <person name="Sun H."/>
            <person name="Florea L."/>
            <person name="Miller W."/>
            <person name="Stoneking T."/>
            <person name="Nhan M."/>
            <person name="Waterston R."/>
            <person name="Wilson R.K."/>
        </authorList>
    </citation>
    <scope>NUCLEOTIDE SEQUENCE [LARGE SCALE GENOMIC DNA]</scope>
    <source>
        <strain>LT2 / SGSC1412 / ATCC 700720</strain>
    </source>
</reference>
<feature type="chain" id="PRO_0000160231" description="NAD-dependent malic enzyme">
    <location>
        <begin position="1"/>
        <end position="565"/>
    </location>
</feature>
<feature type="active site" description="Proton donor" evidence="1">
    <location>
        <position position="104"/>
    </location>
</feature>
<feature type="active site" description="Proton acceptor" evidence="1">
    <location>
        <position position="175"/>
    </location>
</feature>
<feature type="binding site" evidence="1">
    <location>
        <position position="157"/>
    </location>
    <ligand>
        <name>NAD(+)</name>
        <dbReference type="ChEBI" id="CHEBI:57540"/>
    </ligand>
</feature>
<feature type="binding site" evidence="1">
    <location>
        <position position="246"/>
    </location>
    <ligand>
        <name>a divalent metal cation</name>
        <dbReference type="ChEBI" id="CHEBI:60240"/>
    </ligand>
</feature>
<feature type="binding site" evidence="1">
    <location>
        <position position="247"/>
    </location>
    <ligand>
        <name>a divalent metal cation</name>
        <dbReference type="ChEBI" id="CHEBI:60240"/>
    </ligand>
</feature>
<feature type="binding site" evidence="1">
    <location>
        <position position="270"/>
    </location>
    <ligand>
        <name>a divalent metal cation</name>
        <dbReference type="ChEBI" id="CHEBI:60240"/>
    </ligand>
</feature>
<feature type="binding site" evidence="1">
    <location>
        <position position="270"/>
    </location>
    <ligand>
        <name>NAD(+)</name>
        <dbReference type="ChEBI" id="CHEBI:57540"/>
    </ligand>
</feature>
<feature type="binding site" evidence="1">
    <location>
        <position position="418"/>
    </location>
    <ligand>
        <name>NAD(+)</name>
        <dbReference type="ChEBI" id="CHEBI:57540"/>
    </ligand>
</feature>
<feature type="site" description="Important for activity" evidence="1">
    <location>
        <position position="270"/>
    </location>
</feature>
<keyword id="KW-0479">Metal-binding</keyword>
<keyword id="KW-0520">NAD</keyword>
<keyword id="KW-0560">Oxidoreductase</keyword>
<keyword id="KW-1185">Reference proteome</keyword>
<sequence>METTTKKARSLYIPYAGPVLLEFPLLNKGSAFSVEERRNFNLSGLLPEVVESIEEQAERAWLQYQGFKTEIDKHIYLRNIQDTNETLFYRLVQNHLEEMMPVIYTPTVGAACERFSEIYRRARGVFISYPNRHNMDDILQNVPNHNIKVIVVTDGERILGLGDQGIGGMGIPIGKLSLYTACGGISPAYTLPVVLDVGTNNQQLLNDPLYMGWRHPRITDDEYYAFVDEFIQAVKQRWPDILLQFEDFAQKNAMPLLTRYRDEICSFNDDIQGTAAVTVGTLIAASRAAGSQLSEQKIVFLGAGSAGCGIAEQIIAQTQREGLSEDAARQNVFMVDRFGLLTDRMPNLLPFQAKLVQKCDNLQHWDTENDVLSLLDVVRNVKPDILIGVSGQTGLFTEEIIREMHKHCPRPIVMPLSNPTSRVEATPQDIIAWTEGNALVATGSPFSPVIWKDKVYPIAQCNNAYIFPGIGLGVIASGASRITDEMLMSASETLAKHSPLVNNGEGLVLPALKDIQVVSRAIAFAVGKMAQQQGVAVKTSAEALQQAIDDNFWKPEYRDYRRTSI</sequence>
<comment type="catalytic activity">
    <reaction evidence="1">
        <text>(S)-malate + NAD(+) = pyruvate + CO2 + NADH</text>
        <dbReference type="Rhea" id="RHEA:12653"/>
        <dbReference type="ChEBI" id="CHEBI:15361"/>
        <dbReference type="ChEBI" id="CHEBI:15589"/>
        <dbReference type="ChEBI" id="CHEBI:16526"/>
        <dbReference type="ChEBI" id="CHEBI:57540"/>
        <dbReference type="ChEBI" id="CHEBI:57945"/>
        <dbReference type="EC" id="1.1.1.38"/>
    </reaction>
</comment>
<comment type="catalytic activity">
    <reaction evidence="1">
        <text>oxaloacetate + H(+) = pyruvate + CO2</text>
        <dbReference type="Rhea" id="RHEA:15641"/>
        <dbReference type="ChEBI" id="CHEBI:15361"/>
        <dbReference type="ChEBI" id="CHEBI:15378"/>
        <dbReference type="ChEBI" id="CHEBI:16452"/>
        <dbReference type="ChEBI" id="CHEBI:16526"/>
        <dbReference type="EC" id="1.1.1.38"/>
    </reaction>
</comment>
<comment type="cofactor">
    <cofactor evidence="1">
        <name>Mg(2+)</name>
        <dbReference type="ChEBI" id="CHEBI:18420"/>
    </cofactor>
    <cofactor evidence="1">
        <name>Mn(2+)</name>
        <dbReference type="ChEBI" id="CHEBI:29035"/>
    </cofactor>
    <text evidence="1">Divalent metal cations. Prefers magnesium or manganese.</text>
</comment>
<comment type="subunit">
    <text evidence="1">Homotetramer.</text>
</comment>
<comment type="similarity">
    <text evidence="1">Belongs to the malic enzymes family.</text>
</comment>
<dbReference type="EC" id="1.1.1.38" evidence="1"/>
<dbReference type="EMBL" id="AE006468">
    <property type="protein sequence ID" value="AAL20484.1"/>
    <property type="molecule type" value="Genomic_DNA"/>
</dbReference>
<dbReference type="RefSeq" id="WP_000450511.1">
    <property type="nucleotide sequence ID" value="NC_003197.2"/>
</dbReference>
<dbReference type="SMR" id="Q8ZPE8"/>
<dbReference type="STRING" id="99287.STM1566"/>
<dbReference type="PaxDb" id="99287-STM1566"/>
<dbReference type="KEGG" id="stm:STM1566"/>
<dbReference type="PATRIC" id="fig|99287.12.peg.1657"/>
<dbReference type="HOGENOM" id="CLU_011405_5_2_6"/>
<dbReference type="OMA" id="QIVNHMV"/>
<dbReference type="PhylomeDB" id="Q8ZPE8"/>
<dbReference type="BioCyc" id="SENT99287:STM1566-MONOMER"/>
<dbReference type="Proteomes" id="UP000001014">
    <property type="component" value="Chromosome"/>
</dbReference>
<dbReference type="GO" id="GO:0005829">
    <property type="term" value="C:cytosol"/>
    <property type="evidence" value="ECO:0000318"/>
    <property type="project" value="GO_Central"/>
</dbReference>
<dbReference type="GO" id="GO:0004471">
    <property type="term" value="F:malate dehydrogenase (decarboxylating) (NAD+) activity"/>
    <property type="evidence" value="ECO:0007669"/>
    <property type="project" value="UniProtKB-UniRule"/>
</dbReference>
<dbReference type="GO" id="GO:0004470">
    <property type="term" value="F:malic enzyme activity"/>
    <property type="evidence" value="ECO:0000318"/>
    <property type="project" value="GO_Central"/>
</dbReference>
<dbReference type="GO" id="GO:0046872">
    <property type="term" value="F:metal ion binding"/>
    <property type="evidence" value="ECO:0007669"/>
    <property type="project" value="UniProtKB-KW"/>
</dbReference>
<dbReference type="GO" id="GO:0051287">
    <property type="term" value="F:NAD binding"/>
    <property type="evidence" value="ECO:0007669"/>
    <property type="project" value="InterPro"/>
</dbReference>
<dbReference type="GO" id="GO:0008948">
    <property type="term" value="F:oxaloacetate decarboxylase activity"/>
    <property type="evidence" value="ECO:0007669"/>
    <property type="project" value="UniProtKB-UniRule"/>
</dbReference>
<dbReference type="GO" id="GO:0006108">
    <property type="term" value="P:malate metabolic process"/>
    <property type="evidence" value="ECO:0000318"/>
    <property type="project" value="GO_Central"/>
</dbReference>
<dbReference type="GO" id="GO:0006090">
    <property type="term" value="P:pyruvate metabolic process"/>
    <property type="evidence" value="ECO:0000318"/>
    <property type="project" value="GO_Central"/>
</dbReference>
<dbReference type="CDD" id="cd05312">
    <property type="entry name" value="NAD_bind_1_malic_enz"/>
    <property type="match status" value="1"/>
</dbReference>
<dbReference type="FunFam" id="3.40.50.10380:FF:000001">
    <property type="entry name" value="NAD-dependent malic enzyme"/>
    <property type="match status" value="1"/>
</dbReference>
<dbReference type="FunFam" id="3.40.50.720:FF:000055">
    <property type="entry name" value="NAD-dependent malic enzyme"/>
    <property type="match status" value="1"/>
</dbReference>
<dbReference type="Gene3D" id="3.40.50.10380">
    <property type="entry name" value="Malic enzyme, N-terminal domain"/>
    <property type="match status" value="1"/>
</dbReference>
<dbReference type="Gene3D" id="3.40.50.720">
    <property type="entry name" value="NAD(P)-binding Rossmann-like Domain"/>
    <property type="match status" value="1"/>
</dbReference>
<dbReference type="HAMAP" id="MF_01619">
    <property type="entry name" value="NAD_malic_enz"/>
    <property type="match status" value="1"/>
</dbReference>
<dbReference type="InterPro" id="IPR046346">
    <property type="entry name" value="Aminoacid_DH-like_N_sf"/>
</dbReference>
<dbReference type="InterPro" id="IPR015884">
    <property type="entry name" value="Malic_enzyme_CS"/>
</dbReference>
<dbReference type="InterPro" id="IPR012301">
    <property type="entry name" value="Malic_N_dom"/>
</dbReference>
<dbReference type="InterPro" id="IPR037062">
    <property type="entry name" value="Malic_N_dom_sf"/>
</dbReference>
<dbReference type="InterPro" id="IPR012302">
    <property type="entry name" value="Malic_NAD-bd"/>
</dbReference>
<dbReference type="InterPro" id="IPR001891">
    <property type="entry name" value="Malic_OxRdtase"/>
</dbReference>
<dbReference type="InterPro" id="IPR036291">
    <property type="entry name" value="NAD(P)-bd_dom_sf"/>
</dbReference>
<dbReference type="InterPro" id="IPR023667">
    <property type="entry name" value="NAD_malic_enz_proteobac"/>
</dbReference>
<dbReference type="NCBIfam" id="NF010052">
    <property type="entry name" value="PRK13529.1"/>
    <property type="match status" value="1"/>
</dbReference>
<dbReference type="PANTHER" id="PTHR23406">
    <property type="entry name" value="MALIC ENZYME-RELATED"/>
    <property type="match status" value="1"/>
</dbReference>
<dbReference type="PANTHER" id="PTHR23406:SF34">
    <property type="entry name" value="NAD-DEPENDENT MALIC ENZYME, MITOCHONDRIAL"/>
    <property type="match status" value="1"/>
</dbReference>
<dbReference type="Pfam" id="PF00390">
    <property type="entry name" value="malic"/>
    <property type="match status" value="1"/>
</dbReference>
<dbReference type="Pfam" id="PF03949">
    <property type="entry name" value="Malic_M"/>
    <property type="match status" value="1"/>
</dbReference>
<dbReference type="PIRSF" id="PIRSF000106">
    <property type="entry name" value="ME"/>
    <property type="match status" value="1"/>
</dbReference>
<dbReference type="PRINTS" id="PR00072">
    <property type="entry name" value="MALOXRDTASE"/>
</dbReference>
<dbReference type="SMART" id="SM01274">
    <property type="entry name" value="malic"/>
    <property type="match status" value="1"/>
</dbReference>
<dbReference type="SMART" id="SM00919">
    <property type="entry name" value="Malic_M"/>
    <property type="match status" value="1"/>
</dbReference>
<dbReference type="SUPFAM" id="SSF53223">
    <property type="entry name" value="Aminoacid dehydrogenase-like, N-terminal domain"/>
    <property type="match status" value="1"/>
</dbReference>
<dbReference type="SUPFAM" id="SSF51735">
    <property type="entry name" value="NAD(P)-binding Rossmann-fold domains"/>
    <property type="match status" value="1"/>
</dbReference>
<dbReference type="PROSITE" id="PS00331">
    <property type="entry name" value="MALIC_ENZYMES"/>
    <property type="match status" value="1"/>
</dbReference>
<organism>
    <name type="scientific">Salmonella typhimurium (strain LT2 / SGSC1412 / ATCC 700720)</name>
    <dbReference type="NCBI Taxonomy" id="99287"/>
    <lineage>
        <taxon>Bacteria</taxon>
        <taxon>Pseudomonadati</taxon>
        <taxon>Pseudomonadota</taxon>
        <taxon>Gammaproteobacteria</taxon>
        <taxon>Enterobacterales</taxon>
        <taxon>Enterobacteriaceae</taxon>
        <taxon>Salmonella</taxon>
    </lineage>
</organism>
<name>MAO1_SALTY</name>
<protein>
    <recommendedName>
        <fullName evidence="1">NAD-dependent malic enzyme</fullName>
        <shortName evidence="1">NAD-ME</shortName>
        <ecNumber evidence="1">1.1.1.38</ecNumber>
    </recommendedName>
</protein>
<gene>
    <name evidence="1" type="primary">maeA</name>
    <name type="ordered locus">STM1566</name>
</gene>
<accession>Q8ZPE8</accession>
<proteinExistence type="inferred from homology"/>
<evidence type="ECO:0000255" key="1">
    <source>
        <dbReference type="HAMAP-Rule" id="MF_01619"/>
    </source>
</evidence>